<organism>
    <name type="scientific">Dictyostelium discoideum</name>
    <name type="common">Social amoeba</name>
    <dbReference type="NCBI Taxonomy" id="44689"/>
    <lineage>
        <taxon>Eukaryota</taxon>
        <taxon>Amoebozoa</taxon>
        <taxon>Evosea</taxon>
        <taxon>Eumycetozoa</taxon>
        <taxon>Dictyostelia</taxon>
        <taxon>Dictyosteliales</taxon>
        <taxon>Dictyosteliaceae</taxon>
        <taxon>Dictyostelium</taxon>
    </lineage>
</organism>
<dbReference type="EMBL" id="AAFI02000071">
    <property type="protein sequence ID" value="EAL65059.1"/>
    <property type="status" value="ALT_SEQ"/>
    <property type="molecule type" value="Genomic_DNA"/>
</dbReference>
<dbReference type="RefSeq" id="XP_638420.1">
    <property type="nucleotide sequence ID" value="XM_633328.1"/>
</dbReference>
<dbReference type="FunCoup" id="Q54P38">
    <property type="interactions" value="877"/>
</dbReference>
<dbReference type="EnsemblProtists" id="EAL65059">
    <property type="protein sequence ID" value="EAL65059"/>
    <property type="gene ID" value="DDB_G0284813"/>
</dbReference>
<dbReference type="GeneID" id="8624790"/>
<dbReference type="KEGG" id="ddi:DDB_G0284813"/>
<dbReference type="dictyBase" id="DDB_G0284813"/>
<dbReference type="VEuPathDB" id="AmoebaDB:DDB_G0284813"/>
<dbReference type="InParanoid" id="Q54P38"/>
<dbReference type="PRO" id="PR:Q54P38"/>
<dbReference type="Proteomes" id="UP000002195">
    <property type="component" value="Chromosome 4"/>
</dbReference>
<dbReference type="GO" id="GO:0005576">
    <property type="term" value="C:extracellular region"/>
    <property type="evidence" value="ECO:0007669"/>
    <property type="project" value="UniProtKB-SubCell"/>
</dbReference>
<accession>Q54P38</accession>
<gene>
    <name type="ORF">DDB_G0284813</name>
</gene>
<reference key="1">
    <citation type="journal article" date="2005" name="Nature">
        <title>The genome of the social amoeba Dictyostelium discoideum.</title>
        <authorList>
            <person name="Eichinger L."/>
            <person name="Pachebat J.A."/>
            <person name="Gloeckner G."/>
            <person name="Rajandream M.A."/>
            <person name="Sucgang R."/>
            <person name="Berriman M."/>
            <person name="Song J."/>
            <person name="Olsen R."/>
            <person name="Szafranski K."/>
            <person name="Xu Q."/>
            <person name="Tunggal B."/>
            <person name="Kummerfeld S."/>
            <person name="Madera M."/>
            <person name="Konfortov B.A."/>
            <person name="Rivero F."/>
            <person name="Bankier A.T."/>
            <person name="Lehmann R."/>
            <person name="Hamlin N."/>
            <person name="Davies R."/>
            <person name="Gaudet P."/>
            <person name="Fey P."/>
            <person name="Pilcher K."/>
            <person name="Chen G."/>
            <person name="Saunders D."/>
            <person name="Sodergren E.J."/>
            <person name="Davis P."/>
            <person name="Kerhornou A."/>
            <person name="Nie X."/>
            <person name="Hall N."/>
            <person name="Anjard C."/>
            <person name="Hemphill L."/>
            <person name="Bason N."/>
            <person name="Farbrother P."/>
            <person name="Desany B."/>
            <person name="Just E."/>
            <person name="Morio T."/>
            <person name="Rost R."/>
            <person name="Churcher C.M."/>
            <person name="Cooper J."/>
            <person name="Haydock S."/>
            <person name="van Driessche N."/>
            <person name="Cronin A."/>
            <person name="Goodhead I."/>
            <person name="Muzny D.M."/>
            <person name="Mourier T."/>
            <person name="Pain A."/>
            <person name="Lu M."/>
            <person name="Harper D."/>
            <person name="Lindsay R."/>
            <person name="Hauser H."/>
            <person name="James K.D."/>
            <person name="Quiles M."/>
            <person name="Madan Babu M."/>
            <person name="Saito T."/>
            <person name="Buchrieser C."/>
            <person name="Wardroper A."/>
            <person name="Felder M."/>
            <person name="Thangavelu M."/>
            <person name="Johnson D."/>
            <person name="Knights A."/>
            <person name="Loulseged H."/>
            <person name="Mungall K.L."/>
            <person name="Oliver K."/>
            <person name="Price C."/>
            <person name="Quail M.A."/>
            <person name="Urushihara H."/>
            <person name="Hernandez J."/>
            <person name="Rabbinowitsch E."/>
            <person name="Steffen D."/>
            <person name="Sanders M."/>
            <person name="Ma J."/>
            <person name="Kohara Y."/>
            <person name="Sharp S."/>
            <person name="Simmonds M.N."/>
            <person name="Spiegler S."/>
            <person name="Tivey A."/>
            <person name="Sugano S."/>
            <person name="White B."/>
            <person name="Walker D."/>
            <person name="Woodward J.R."/>
            <person name="Winckler T."/>
            <person name="Tanaka Y."/>
            <person name="Shaulsky G."/>
            <person name="Schleicher M."/>
            <person name="Weinstock G.M."/>
            <person name="Rosenthal A."/>
            <person name="Cox E.C."/>
            <person name="Chisholm R.L."/>
            <person name="Gibbs R.A."/>
            <person name="Loomis W.F."/>
            <person name="Platzer M."/>
            <person name="Kay R.R."/>
            <person name="Williams J.G."/>
            <person name="Dear P.H."/>
            <person name="Noegel A.A."/>
            <person name="Barrell B.G."/>
            <person name="Kuspa A."/>
        </authorList>
    </citation>
    <scope>NUCLEOTIDE SEQUENCE [LARGE SCALE GENOMIC DNA]</scope>
    <source>
        <strain>AX4</strain>
    </source>
</reference>
<protein>
    <recommendedName>
        <fullName>Putative uncharacterized protein DDB_G0284813</fullName>
    </recommendedName>
</protein>
<evidence type="ECO:0000255" key="1"/>
<evidence type="ECO:0000305" key="2"/>
<name>Y6208_DICDI</name>
<sequence>MIEDPSKKISLWQKWINVDPKKRILFSLGLFALSASALYIDQMDPDTNPFKIDRKDVTYKTIDYSKPVGQGRVTIVRNGEIIKEE</sequence>
<keyword id="KW-1185">Reference proteome</keyword>
<keyword id="KW-0964">Secreted</keyword>
<keyword id="KW-0732">Signal</keyword>
<comment type="subcellular location">
    <subcellularLocation>
        <location evidence="2">Secreted</location>
    </subcellularLocation>
</comment>
<comment type="sequence caution" evidence="2">
    <conflict type="erroneous gene model prediction">
        <sequence resource="EMBL-CDS" id="EAL65059"/>
    </conflict>
</comment>
<proteinExistence type="inferred from homology"/>
<feature type="signal peptide" evidence="1">
    <location>
        <begin position="1"/>
        <end position="35"/>
    </location>
</feature>
<feature type="chain" id="PRO_0000350788" description="Putative uncharacterized protein DDB_G0284813">
    <location>
        <begin position="36"/>
        <end position="85"/>
    </location>
</feature>